<evidence type="ECO:0000255" key="1">
    <source>
        <dbReference type="HAMAP-Rule" id="MF_00372"/>
    </source>
</evidence>
<sequence length="401" mass="43172">MKTLWQHCNVASMASGVYSIIEDAAMVTSGAHIEWIGRRSEAPAGDYAQVNDLAGAWVTPGFIDCHTHTVFGGNRSGEFEQRLQGVSYAEIAAAGGGIASTVRATRAATEEELFGSARKRLLSLLRDGVTSVEIKSGYGLDLASERKILRVIRRLGEELPVSVRSTCLAAHALPPEYAERSDAYIEHICSDMLPALAAEGLVDAVDAFCEYLAFSPEQVERVFIAAQQLGLPVKLHAEQLSSLHGSSLAARYHALSADHLEFMTEEDAIAMAASGTVAVLLPGAFYFLRETQQPPMEALRKHGVKIAVASDLNPGTSPALSLRLMLNMACTCFRMTPEEALAGVTLHAAQALGMEKTHGSLEVGKVADFVAWQIDRPADLAYWLGGDLEKRVVRHGVEVTV</sequence>
<name>HUTI_PSEF5</name>
<gene>
    <name evidence="1" type="primary">hutI</name>
    <name type="ordered locus">PFL_0409</name>
</gene>
<proteinExistence type="inferred from homology"/>
<protein>
    <recommendedName>
        <fullName evidence="1">Imidazolonepropionase</fullName>
        <ecNumber evidence="1">3.5.2.7</ecNumber>
    </recommendedName>
    <alternativeName>
        <fullName evidence="1">Imidazolone-5-propionate hydrolase</fullName>
    </alternativeName>
</protein>
<keyword id="KW-0963">Cytoplasm</keyword>
<keyword id="KW-0369">Histidine metabolism</keyword>
<keyword id="KW-0378">Hydrolase</keyword>
<keyword id="KW-0408">Iron</keyword>
<keyword id="KW-0479">Metal-binding</keyword>
<keyword id="KW-0862">Zinc</keyword>
<accession>Q4KJN0</accession>
<reference key="1">
    <citation type="journal article" date="2005" name="Nat. Biotechnol.">
        <title>Complete genome sequence of the plant commensal Pseudomonas fluorescens Pf-5.</title>
        <authorList>
            <person name="Paulsen I.T."/>
            <person name="Press C.M."/>
            <person name="Ravel J."/>
            <person name="Kobayashi D.Y."/>
            <person name="Myers G.S.A."/>
            <person name="Mavrodi D.V."/>
            <person name="DeBoy R.T."/>
            <person name="Seshadri R."/>
            <person name="Ren Q."/>
            <person name="Madupu R."/>
            <person name="Dodson R.J."/>
            <person name="Durkin A.S."/>
            <person name="Brinkac L.M."/>
            <person name="Daugherty S.C."/>
            <person name="Sullivan S.A."/>
            <person name="Rosovitz M.J."/>
            <person name="Gwinn M.L."/>
            <person name="Zhou L."/>
            <person name="Schneider D.J."/>
            <person name="Cartinhour S.W."/>
            <person name="Nelson W.C."/>
            <person name="Weidman J."/>
            <person name="Watkins K."/>
            <person name="Tran K."/>
            <person name="Khouri H."/>
            <person name="Pierson E.A."/>
            <person name="Pierson L.S. III"/>
            <person name="Thomashow L.S."/>
            <person name="Loper J.E."/>
        </authorList>
    </citation>
    <scope>NUCLEOTIDE SEQUENCE [LARGE SCALE GENOMIC DNA]</scope>
    <source>
        <strain>ATCC BAA-477 / NRRL B-23932 / Pf-5</strain>
    </source>
</reference>
<dbReference type="EC" id="3.5.2.7" evidence="1"/>
<dbReference type="EMBL" id="CP000076">
    <property type="protein sequence ID" value="AAY95818.1"/>
    <property type="molecule type" value="Genomic_DNA"/>
</dbReference>
<dbReference type="RefSeq" id="WP_011058784.1">
    <property type="nucleotide sequence ID" value="NC_004129.6"/>
</dbReference>
<dbReference type="SMR" id="Q4KJN0"/>
<dbReference type="STRING" id="220664.PFL_0409"/>
<dbReference type="KEGG" id="pfl:PFL_0409"/>
<dbReference type="PATRIC" id="fig|220664.5.peg.417"/>
<dbReference type="eggNOG" id="COG1228">
    <property type="taxonomic scope" value="Bacteria"/>
</dbReference>
<dbReference type="HOGENOM" id="CLU_041647_0_0_6"/>
<dbReference type="UniPathway" id="UPA00379">
    <property type="reaction ID" value="UER00551"/>
</dbReference>
<dbReference type="Proteomes" id="UP000008540">
    <property type="component" value="Chromosome"/>
</dbReference>
<dbReference type="GO" id="GO:0005737">
    <property type="term" value="C:cytoplasm"/>
    <property type="evidence" value="ECO:0007669"/>
    <property type="project" value="UniProtKB-SubCell"/>
</dbReference>
<dbReference type="GO" id="GO:0050480">
    <property type="term" value="F:imidazolonepropionase activity"/>
    <property type="evidence" value="ECO:0007669"/>
    <property type="project" value="UniProtKB-UniRule"/>
</dbReference>
<dbReference type="GO" id="GO:0005506">
    <property type="term" value="F:iron ion binding"/>
    <property type="evidence" value="ECO:0007669"/>
    <property type="project" value="UniProtKB-UniRule"/>
</dbReference>
<dbReference type="GO" id="GO:0008270">
    <property type="term" value="F:zinc ion binding"/>
    <property type="evidence" value="ECO:0007669"/>
    <property type="project" value="UniProtKB-UniRule"/>
</dbReference>
<dbReference type="GO" id="GO:0019556">
    <property type="term" value="P:L-histidine catabolic process to glutamate and formamide"/>
    <property type="evidence" value="ECO:0007669"/>
    <property type="project" value="UniProtKB-UniPathway"/>
</dbReference>
<dbReference type="GO" id="GO:0019557">
    <property type="term" value="P:L-histidine catabolic process to glutamate and formate"/>
    <property type="evidence" value="ECO:0007669"/>
    <property type="project" value="UniProtKB-UniPathway"/>
</dbReference>
<dbReference type="CDD" id="cd01296">
    <property type="entry name" value="Imidazolone-5PH"/>
    <property type="match status" value="1"/>
</dbReference>
<dbReference type="FunFam" id="3.20.20.140:FF:000007">
    <property type="entry name" value="Imidazolonepropionase"/>
    <property type="match status" value="1"/>
</dbReference>
<dbReference type="Gene3D" id="3.20.20.140">
    <property type="entry name" value="Metal-dependent hydrolases"/>
    <property type="match status" value="1"/>
</dbReference>
<dbReference type="Gene3D" id="2.30.40.10">
    <property type="entry name" value="Urease, subunit C, domain 1"/>
    <property type="match status" value="1"/>
</dbReference>
<dbReference type="HAMAP" id="MF_00372">
    <property type="entry name" value="HutI"/>
    <property type="match status" value="1"/>
</dbReference>
<dbReference type="InterPro" id="IPR006680">
    <property type="entry name" value="Amidohydro-rel"/>
</dbReference>
<dbReference type="InterPro" id="IPR005920">
    <property type="entry name" value="HutI"/>
</dbReference>
<dbReference type="InterPro" id="IPR011059">
    <property type="entry name" value="Metal-dep_hydrolase_composite"/>
</dbReference>
<dbReference type="InterPro" id="IPR032466">
    <property type="entry name" value="Metal_Hydrolase"/>
</dbReference>
<dbReference type="NCBIfam" id="TIGR01224">
    <property type="entry name" value="hutI"/>
    <property type="match status" value="1"/>
</dbReference>
<dbReference type="PANTHER" id="PTHR42752">
    <property type="entry name" value="IMIDAZOLONEPROPIONASE"/>
    <property type="match status" value="1"/>
</dbReference>
<dbReference type="PANTHER" id="PTHR42752:SF1">
    <property type="entry name" value="IMIDAZOLONEPROPIONASE-RELATED"/>
    <property type="match status" value="1"/>
</dbReference>
<dbReference type="Pfam" id="PF01979">
    <property type="entry name" value="Amidohydro_1"/>
    <property type="match status" value="1"/>
</dbReference>
<dbReference type="SUPFAM" id="SSF51338">
    <property type="entry name" value="Composite domain of metallo-dependent hydrolases"/>
    <property type="match status" value="1"/>
</dbReference>
<dbReference type="SUPFAM" id="SSF51556">
    <property type="entry name" value="Metallo-dependent hydrolases"/>
    <property type="match status" value="1"/>
</dbReference>
<organism>
    <name type="scientific">Pseudomonas fluorescens (strain ATCC BAA-477 / NRRL B-23932 / Pf-5)</name>
    <dbReference type="NCBI Taxonomy" id="220664"/>
    <lineage>
        <taxon>Bacteria</taxon>
        <taxon>Pseudomonadati</taxon>
        <taxon>Pseudomonadota</taxon>
        <taxon>Gammaproteobacteria</taxon>
        <taxon>Pseudomonadales</taxon>
        <taxon>Pseudomonadaceae</taxon>
        <taxon>Pseudomonas</taxon>
    </lineage>
</organism>
<feature type="chain" id="PRO_0000306488" description="Imidazolonepropionase">
    <location>
        <begin position="1"/>
        <end position="401"/>
    </location>
</feature>
<feature type="binding site" evidence="1">
    <location>
        <position position="66"/>
    </location>
    <ligand>
        <name>Fe(3+)</name>
        <dbReference type="ChEBI" id="CHEBI:29034"/>
    </ligand>
</feature>
<feature type="binding site" evidence="1">
    <location>
        <position position="66"/>
    </location>
    <ligand>
        <name>Zn(2+)</name>
        <dbReference type="ChEBI" id="CHEBI:29105"/>
    </ligand>
</feature>
<feature type="binding site" evidence="1">
    <location>
        <position position="68"/>
    </location>
    <ligand>
        <name>Fe(3+)</name>
        <dbReference type="ChEBI" id="CHEBI:29034"/>
    </ligand>
</feature>
<feature type="binding site" evidence="1">
    <location>
        <position position="68"/>
    </location>
    <ligand>
        <name>Zn(2+)</name>
        <dbReference type="ChEBI" id="CHEBI:29105"/>
    </ligand>
</feature>
<feature type="binding site" evidence="1">
    <location>
        <position position="75"/>
    </location>
    <ligand>
        <name>4-imidazolone-5-propanoate</name>
        <dbReference type="ChEBI" id="CHEBI:77893"/>
    </ligand>
</feature>
<feature type="binding site" evidence="1">
    <location>
        <position position="138"/>
    </location>
    <ligand>
        <name>4-imidazolone-5-propanoate</name>
        <dbReference type="ChEBI" id="CHEBI:77893"/>
    </ligand>
</feature>
<feature type="binding site" evidence="1">
    <location>
        <position position="138"/>
    </location>
    <ligand>
        <name>N-formimidoyl-L-glutamate</name>
        <dbReference type="ChEBI" id="CHEBI:58928"/>
    </ligand>
</feature>
<feature type="binding site" evidence="1">
    <location>
        <position position="171"/>
    </location>
    <ligand>
        <name>4-imidazolone-5-propanoate</name>
        <dbReference type="ChEBI" id="CHEBI:77893"/>
    </ligand>
</feature>
<feature type="binding site" evidence="1">
    <location>
        <position position="236"/>
    </location>
    <ligand>
        <name>Fe(3+)</name>
        <dbReference type="ChEBI" id="CHEBI:29034"/>
    </ligand>
</feature>
<feature type="binding site" evidence="1">
    <location>
        <position position="236"/>
    </location>
    <ligand>
        <name>Zn(2+)</name>
        <dbReference type="ChEBI" id="CHEBI:29105"/>
    </ligand>
</feature>
<feature type="binding site" evidence="1">
    <location>
        <position position="239"/>
    </location>
    <ligand>
        <name>4-imidazolone-5-propanoate</name>
        <dbReference type="ChEBI" id="CHEBI:77893"/>
    </ligand>
</feature>
<feature type="binding site" evidence="1">
    <location>
        <position position="311"/>
    </location>
    <ligand>
        <name>Fe(3+)</name>
        <dbReference type="ChEBI" id="CHEBI:29034"/>
    </ligand>
</feature>
<feature type="binding site" evidence="1">
    <location>
        <position position="311"/>
    </location>
    <ligand>
        <name>Zn(2+)</name>
        <dbReference type="ChEBI" id="CHEBI:29105"/>
    </ligand>
</feature>
<feature type="binding site" evidence="1">
    <location>
        <position position="313"/>
    </location>
    <ligand>
        <name>N-formimidoyl-L-glutamate</name>
        <dbReference type="ChEBI" id="CHEBI:58928"/>
    </ligand>
</feature>
<feature type="binding site" evidence="1">
    <location>
        <position position="315"/>
    </location>
    <ligand>
        <name>N-formimidoyl-L-glutamate</name>
        <dbReference type="ChEBI" id="CHEBI:58928"/>
    </ligand>
</feature>
<feature type="binding site" evidence="1">
    <location>
        <position position="316"/>
    </location>
    <ligand>
        <name>4-imidazolone-5-propanoate</name>
        <dbReference type="ChEBI" id="CHEBI:77893"/>
    </ligand>
</feature>
<comment type="function">
    <text evidence="1">Catalyzes the hydrolytic cleavage of the carbon-nitrogen bond in imidazolone-5-propanoate to yield N-formimidoyl-L-glutamate. It is the third step in the universal histidine degradation pathway.</text>
</comment>
<comment type="catalytic activity">
    <reaction evidence="1">
        <text>4-imidazolone-5-propanoate + H2O = N-formimidoyl-L-glutamate</text>
        <dbReference type="Rhea" id="RHEA:23660"/>
        <dbReference type="ChEBI" id="CHEBI:15377"/>
        <dbReference type="ChEBI" id="CHEBI:58928"/>
        <dbReference type="ChEBI" id="CHEBI:77893"/>
        <dbReference type="EC" id="3.5.2.7"/>
    </reaction>
</comment>
<comment type="cofactor">
    <cofactor evidence="1">
        <name>Zn(2+)</name>
        <dbReference type="ChEBI" id="CHEBI:29105"/>
    </cofactor>
    <cofactor evidence="1">
        <name>Fe(3+)</name>
        <dbReference type="ChEBI" id="CHEBI:29034"/>
    </cofactor>
    <text evidence="1">Binds 1 zinc or iron ion per subunit.</text>
</comment>
<comment type="pathway">
    <text evidence="1">Amino-acid degradation; L-histidine degradation into L-glutamate; N-formimidoyl-L-glutamate from L-histidine: step 3/3.</text>
</comment>
<comment type="subcellular location">
    <subcellularLocation>
        <location evidence="1">Cytoplasm</location>
    </subcellularLocation>
</comment>
<comment type="similarity">
    <text evidence="1">Belongs to the metallo-dependent hydrolases superfamily. HutI family.</text>
</comment>